<gene>
    <name evidence="1" type="primary">rpmI</name>
    <name type="ordered locus">lwe1805</name>
</gene>
<keyword id="KW-0687">Ribonucleoprotein</keyword>
<keyword id="KW-0689">Ribosomal protein</keyword>
<accession>A0AJP1</accession>
<protein>
    <recommendedName>
        <fullName evidence="1">Large ribosomal subunit protein bL35</fullName>
    </recommendedName>
    <alternativeName>
        <fullName evidence="3">50S ribosomal protein L35</fullName>
    </alternativeName>
</protein>
<feature type="chain" id="PRO_1000050712" description="Large ribosomal subunit protein bL35">
    <location>
        <begin position="1"/>
        <end position="66"/>
    </location>
</feature>
<feature type="region of interest" description="Disordered" evidence="2">
    <location>
        <begin position="1"/>
        <end position="50"/>
    </location>
</feature>
<feature type="compositionally biased region" description="Basic residues" evidence="2">
    <location>
        <begin position="1"/>
        <end position="28"/>
    </location>
</feature>
<dbReference type="EMBL" id="AM263198">
    <property type="protein sequence ID" value="CAK21223.1"/>
    <property type="molecule type" value="Genomic_DNA"/>
</dbReference>
<dbReference type="RefSeq" id="WP_003720098.1">
    <property type="nucleotide sequence ID" value="NC_008555.1"/>
</dbReference>
<dbReference type="SMR" id="A0AJP1"/>
<dbReference type="STRING" id="386043.lwe1805"/>
<dbReference type="GeneID" id="93239693"/>
<dbReference type="KEGG" id="lwe:lwe1805"/>
<dbReference type="eggNOG" id="COG0291">
    <property type="taxonomic scope" value="Bacteria"/>
</dbReference>
<dbReference type="HOGENOM" id="CLU_169643_3_0_9"/>
<dbReference type="OrthoDB" id="47476at2"/>
<dbReference type="Proteomes" id="UP000000779">
    <property type="component" value="Chromosome"/>
</dbReference>
<dbReference type="GO" id="GO:0022625">
    <property type="term" value="C:cytosolic large ribosomal subunit"/>
    <property type="evidence" value="ECO:0007669"/>
    <property type="project" value="TreeGrafter"/>
</dbReference>
<dbReference type="GO" id="GO:0003735">
    <property type="term" value="F:structural constituent of ribosome"/>
    <property type="evidence" value="ECO:0007669"/>
    <property type="project" value="InterPro"/>
</dbReference>
<dbReference type="GO" id="GO:0006412">
    <property type="term" value="P:translation"/>
    <property type="evidence" value="ECO:0007669"/>
    <property type="project" value="UniProtKB-UniRule"/>
</dbReference>
<dbReference type="FunFam" id="4.10.410.60:FF:000001">
    <property type="entry name" value="50S ribosomal protein L35"/>
    <property type="match status" value="1"/>
</dbReference>
<dbReference type="Gene3D" id="4.10.410.60">
    <property type="match status" value="1"/>
</dbReference>
<dbReference type="HAMAP" id="MF_00514">
    <property type="entry name" value="Ribosomal_bL35"/>
    <property type="match status" value="1"/>
</dbReference>
<dbReference type="InterPro" id="IPR001706">
    <property type="entry name" value="Ribosomal_bL35"/>
</dbReference>
<dbReference type="InterPro" id="IPR021137">
    <property type="entry name" value="Ribosomal_bL35-like"/>
</dbReference>
<dbReference type="InterPro" id="IPR018265">
    <property type="entry name" value="Ribosomal_bL35_CS"/>
</dbReference>
<dbReference type="InterPro" id="IPR037229">
    <property type="entry name" value="Ribosomal_bL35_sf"/>
</dbReference>
<dbReference type="NCBIfam" id="TIGR00001">
    <property type="entry name" value="rpmI_bact"/>
    <property type="match status" value="1"/>
</dbReference>
<dbReference type="PANTHER" id="PTHR33343">
    <property type="entry name" value="54S RIBOSOMAL PROTEIN BL35M"/>
    <property type="match status" value="1"/>
</dbReference>
<dbReference type="PANTHER" id="PTHR33343:SF1">
    <property type="entry name" value="LARGE RIBOSOMAL SUBUNIT PROTEIN BL35M"/>
    <property type="match status" value="1"/>
</dbReference>
<dbReference type="Pfam" id="PF01632">
    <property type="entry name" value="Ribosomal_L35p"/>
    <property type="match status" value="1"/>
</dbReference>
<dbReference type="PRINTS" id="PR00064">
    <property type="entry name" value="RIBOSOMALL35"/>
</dbReference>
<dbReference type="SUPFAM" id="SSF143034">
    <property type="entry name" value="L35p-like"/>
    <property type="match status" value="1"/>
</dbReference>
<dbReference type="PROSITE" id="PS00936">
    <property type="entry name" value="RIBOSOMAL_L35"/>
    <property type="match status" value="1"/>
</dbReference>
<reference key="1">
    <citation type="journal article" date="2006" name="J. Bacteriol.">
        <title>Whole-genome sequence of Listeria welshimeri reveals common steps in genome reduction with Listeria innocua as compared to Listeria monocytogenes.</title>
        <authorList>
            <person name="Hain T."/>
            <person name="Steinweg C."/>
            <person name="Kuenne C.T."/>
            <person name="Billion A."/>
            <person name="Ghai R."/>
            <person name="Chatterjee S.S."/>
            <person name="Domann E."/>
            <person name="Kaerst U."/>
            <person name="Goesmann A."/>
            <person name="Bekel T."/>
            <person name="Bartels D."/>
            <person name="Kaiser O."/>
            <person name="Meyer F."/>
            <person name="Puehler A."/>
            <person name="Weisshaar B."/>
            <person name="Wehland J."/>
            <person name="Liang C."/>
            <person name="Dandekar T."/>
            <person name="Lampidis R."/>
            <person name="Kreft J."/>
            <person name="Goebel W."/>
            <person name="Chakraborty T."/>
        </authorList>
    </citation>
    <scope>NUCLEOTIDE SEQUENCE [LARGE SCALE GENOMIC DNA]</scope>
    <source>
        <strain>ATCC 35897 / DSM 20650 / CCUG 15529 / CIP 8149 / NCTC 11857 / SLCC 5334 / V8</strain>
    </source>
</reference>
<organism>
    <name type="scientific">Listeria welshimeri serovar 6b (strain ATCC 35897 / DSM 20650 / CCUG 15529 / CIP 8149 / NCTC 11857 / SLCC 5334 / V8)</name>
    <dbReference type="NCBI Taxonomy" id="386043"/>
    <lineage>
        <taxon>Bacteria</taxon>
        <taxon>Bacillati</taxon>
        <taxon>Bacillota</taxon>
        <taxon>Bacilli</taxon>
        <taxon>Bacillales</taxon>
        <taxon>Listeriaceae</taxon>
        <taxon>Listeria</taxon>
    </lineage>
</organism>
<proteinExistence type="inferred from homology"/>
<sequence length="66" mass="7720">MPKMKTHRGSAKRFKRTGSGKLKRRHGFTSHMFANKSQKQKRKLRKSAMVSAGDFKRIRQMVAKMK</sequence>
<comment type="similarity">
    <text evidence="1">Belongs to the bacterial ribosomal protein bL35 family.</text>
</comment>
<evidence type="ECO:0000255" key="1">
    <source>
        <dbReference type="HAMAP-Rule" id="MF_00514"/>
    </source>
</evidence>
<evidence type="ECO:0000256" key="2">
    <source>
        <dbReference type="SAM" id="MobiDB-lite"/>
    </source>
</evidence>
<evidence type="ECO:0000305" key="3"/>
<name>RL35_LISW6</name>